<name>CLV3_ARATH</name>
<keyword id="KW-0025">Alternative splicing</keyword>
<keyword id="KW-0217">Developmental protein</keyword>
<keyword id="KW-0221">Differentiation</keyword>
<keyword id="KW-0325">Glycoprotein</keyword>
<keyword id="KW-0379">Hydroxylation</keyword>
<keyword id="KW-1185">Reference proteome</keyword>
<keyword id="KW-0964">Secreted</keyword>
<keyword id="KW-0732">Signal</keyword>
<comment type="function">
    <text>Extracellular signal that regulates meristem maintenance. Acts with CLV1 as a ligand-receptor pair in a signal transduction pathway coordinating growth between adjacent meristematic regions and controlling the balance between meristem cell proliferation and differentiation.</text>
</comment>
<comment type="function">
    <molecule>MCLV3</molecule>
    <text>The secreted peptide MCLV3 activates a signal transduction cascade to restrict WUSCHEL (WUS) expression, inducing shoot and root meristem consumption as cells differentiated into other organs.</text>
</comment>
<comment type="subunit">
    <text evidence="5 6 7 8">Interacts with the extracellular leucine-rich repeat region of CLV1 (PubMed:18202283, PubMed:19525968). Interacts with CLV2 (PubMed:20626648). CLV3-derived CLE peptides interacts with a tetrameric complex made of two CLV2/CRN heterodimers (PubMed:20697738).</text>
</comment>
<comment type="subcellular location">
    <subcellularLocation>
        <location evidence="6">Secreted</location>
        <location evidence="6">Extracellular space</location>
    </subcellularLocation>
</comment>
<comment type="alternative products">
    <event type="alternative splicing"/>
    <isoform>
        <id>Q9XF04-1</id>
        <name>1</name>
        <sequence type="displayed"/>
    </isoform>
    <isoform>
        <id>Q9XF04-2</id>
        <name>2</name>
        <sequence type="described" ref="VSP_016629"/>
    </isoform>
    <isoform>
        <id>Q9XF04-3</id>
        <name>3</name>
        <sequence type="described" ref="VSP_016629 VSP_016630"/>
    </isoform>
</comment>
<comment type="tissue specificity">
    <text>First detected in heart stage embryos in a patch of cells between the developing cotyledons. In vegetative and inflorescence meristems, expressed in a small cone of cells at the meristem apex.</text>
</comment>
<comment type="PTM">
    <molecule>MCLV3</molecule>
    <text evidence="4 6">The MCLV3 peptide contains two hydroxyprolines, but hydroxylation had no direct effect on MCLV3 activity.</text>
</comment>
<comment type="PTM">
    <molecule>MCLV3</molecule>
    <text evidence="6">The O-glycosylation (arabinosylation) of the hydroxyproline P-76 enhances binding affinity of the MCLV3 peptide for its receptor.</text>
</comment>
<comment type="mass spectrometry">
    <molecule>MCLV3</molecule>
    <text>MCLV3 with hydroxyPro-73 and hydroxyPro-76.</text>
</comment>
<comment type="miscellaneous">
    <text>His-81 seems to be essential for the activity of MCLV3.</text>
</comment>
<comment type="miscellaneous">
    <molecule>Isoform 2</molecule>
    <text evidence="11">May be due to intron retention.</text>
</comment>
<comment type="miscellaneous">
    <molecule>Isoform 3</molecule>
    <text evidence="11">May be due to introns retention.</text>
</comment>
<comment type="similarity">
    <text evidence="11">Belongs to the CLV3/ESR signal peptide family.</text>
</comment>
<comment type="sequence caution" evidence="11">
    <conflict type="erroneous gene model prediction">
        <sequence resource="EMBL-CDS" id="AAD42004"/>
    </conflict>
</comment>
<dbReference type="EMBL" id="AF126009">
    <property type="protein sequence ID" value="AAD27620.1"/>
    <property type="molecule type" value="Genomic_DNA"/>
</dbReference>
<dbReference type="EMBL" id="AC006233">
    <property type="protein sequence ID" value="AAD42004.1"/>
    <property type="status" value="ALT_SEQ"/>
    <property type="molecule type" value="Genomic_DNA"/>
</dbReference>
<dbReference type="EMBL" id="CP002685">
    <property type="protein sequence ID" value="AEC07963.1"/>
    <property type="molecule type" value="Genomic_DNA"/>
</dbReference>
<dbReference type="EMBL" id="CP002685">
    <property type="protein sequence ID" value="AEC07964.1"/>
    <property type="molecule type" value="Genomic_DNA"/>
</dbReference>
<dbReference type="EMBL" id="AY219132">
    <property type="protein sequence ID" value="AAO37219.1"/>
    <property type="molecule type" value="mRNA"/>
</dbReference>
<dbReference type="EMBL" id="AY219133">
    <property type="protein sequence ID" value="AAO37220.1"/>
    <property type="molecule type" value="mRNA"/>
</dbReference>
<dbReference type="PIR" id="F84670">
    <property type="entry name" value="F84670"/>
</dbReference>
<dbReference type="RefSeq" id="NP_001118398.1">
    <molecule id="Q9XF04-1"/>
    <property type="nucleotide sequence ID" value="NM_001124926.2"/>
</dbReference>
<dbReference type="RefSeq" id="NP_973541.1">
    <molecule id="Q9XF04-2"/>
    <property type="nucleotide sequence ID" value="NM_201812.1"/>
</dbReference>
<dbReference type="BioGRID" id="2619">
    <property type="interactions" value="3"/>
</dbReference>
<dbReference type="FunCoup" id="Q9XF04">
    <property type="interactions" value="3"/>
</dbReference>
<dbReference type="STRING" id="3702.Q9XF04"/>
<dbReference type="GlyCosmos" id="Q9XF04">
    <property type="glycosylation" value="1 site, No reported glycans"/>
</dbReference>
<dbReference type="PaxDb" id="3702-AT2G27250.3"/>
<dbReference type="EnsemblPlants" id="AT2G27250.2">
    <molecule id="Q9XF04-2"/>
    <property type="protein sequence ID" value="AT2G27250.2"/>
    <property type="gene ID" value="AT2G27250"/>
</dbReference>
<dbReference type="EnsemblPlants" id="AT2G27250.3">
    <molecule id="Q9XF04-1"/>
    <property type="protein sequence ID" value="AT2G27250.3"/>
    <property type="gene ID" value="AT2G27250"/>
</dbReference>
<dbReference type="GeneID" id="817267"/>
<dbReference type="Gramene" id="AT2G27250.2">
    <molecule id="Q9XF04-2"/>
    <property type="protein sequence ID" value="AT2G27250.2"/>
    <property type="gene ID" value="AT2G27250"/>
</dbReference>
<dbReference type="Gramene" id="AT2G27250.3">
    <molecule id="Q9XF04-1"/>
    <property type="protein sequence ID" value="AT2G27250.3"/>
    <property type="gene ID" value="AT2G27250"/>
</dbReference>
<dbReference type="KEGG" id="ath:AT2G27250"/>
<dbReference type="Araport" id="AT2G27250"/>
<dbReference type="TAIR" id="AT2G27250">
    <property type="gene designation" value="CLV3"/>
</dbReference>
<dbReference type="eggNOG" id="ENOG502R373">
    <property type="taxonomic scope" value="Eukaryota"/>
</dbReference>
<dbReference type="HOGENOM" id="CLU_2430134_0_0_1"/>
<dbReference type="InParanoid" id="Q9XF04"/>
<dbReference type="OMA" id="MEREWVG"/>
<dbReference type="PRO" id="PR:Q9XF04"/>
<dbReference type="Proteomes" id="UP000006548">
    <property type="component" value="Chromosome 2"/>
</dbReference>
<dbReference type="ExpressionAtlas" id="Q9XF04">
    <property type="expression patterns" value="baseline and differential"/>
</dbReference>
<dbReference type="GO" id="GO:0048046">
    <property type="term" value="C:apoplast"/>
    <property type="evidence" value="ECO:0000314"/>
    <property type="project" value="TAIR"/>
</dbReference>
<dbReference type="GO" id="GO:0033612">
    <property type="term" value="F:receptor serine/threonine kinase binding"/>
    <property type="evidence" value="ECO:0000353"/>
    <property type="project" value="UniProtKB"/>
</dbReference>
<dbReference type="GO" id="GO:0007166">
    <property type="term" value="P:cell surface receptor signaling pathway"/>
    <property type="evidence" value="ECO:0000314"/>
    <property type="project" value="UniProtKB"/>
</dbReference>
<dbReference type="GO" id="GO:0045168">
    <property type="term" value="P:cell-cell signaling involved in cell fate commitment"/>
    <property type="evidence" value="ECO:0000314"/>
    <property type="project" value="UniProtKB"/>
</dbReference>
<dbReference type="GO" id="GO:0045087">
    <property type="term" value="P:innate immune response"/>
    <property type="evidence" value="ECO:0000314"/>
    <property type="project" value="TAIR"/>
</dbReference>
<dbReference type="GO" id="GO:0010074">
    <property type="term" value="P:maintenance of meristem identity"/>
    <property type="evidence" value="ECO:0000315"/>
    <property type="project" value="TAIR"/>
</dbReference>
<dbReference type="GO" id="GO:0048507">
    <property type="term" value="P:meristem development"/>
    <property type="evidence" value="ECO:0000315"/>
    <property type="project" value="TAIR"/>
</dbReference>
<dbReference type="GO" id="GO:0009934">
    <property type="term" value="P:regulation of meristem structural organization"/>
    <property type="evidence" value="ECO:0000314"/>
    <property type="project" value="TAIR"/>
</dbReference>
<dbReference type="InterPro" id="IPR044962">
    <property type="entry name" value="CLV3/ESR"/>
</dbReference>
<dbReference type="PANTHER" id="PTHR36349">
    <property type="entry name" value="PROTEIN CLAVATA 3"/>
    <property type="match status" value="1"/>
</dbReference>
<dbReference type="PANTHER" id="PTHR36349:SF2">
    <property type="entry name" value="PROTEIN CLAVATA 3"/>
    <property type="match status" value="1"/>
</dbReference>
<proteinExistence type="evidence at protein level"/>
<organism>
    <name type="scientific">Arabidopsis thaliana</name>
    <name type="common">Mouse-ear cress</name>
    <dbReference type="NCBI Taxonomy" id="3702"/>
    <lineage>
        <taxon>Eukaryota</taxon>
        <taxon>Viridiplantae</taxon>
        <taxon>Streptophyta</taxon>
        <taxon>Embryophyta</taxon>
        <taxon>Tracheophyta</taxon>
        <taxon>Spermatophyta</taxon>
        <taxon>Magnoliopsida</taxon>
        <taxon>eudicotyledons</taxon>
        <taxon>Gunneridae</taxon>
        <taxon>Pentapetalae</taxon>
        <taxon>rosids</taxon>
        <taxon>malvids</taxon>
        <taxon>Brassicales</taxon>
        <taxon>Brassicaceae</taxon>
        <taxon>Camelineae</taxon>
        <taxon>Arabidopsis</taxon>
    </lineage>
</organism>
<accession>Q9XF04</accession>
<accession>Q84WX8</accession>
<accession>Q84WX9</accession>
<accession>Q9XIN2</accession>
<reference key="1">
    <citation type="journal article" date="1999" name="Science">
        <title>Signaling of cell fate decisions by CLAVATA3 in Arabidopsis shoot meristems.</title>
        <authorList>
            <person name="Fletcher J.C."/>
            <person name="Brand U."/>
            <person name="Running M.P."/>
            <person name="Simon R."/>
            <person name="Meyerowitz E.M."/>
        </authorList>
    </citation>
    <scope>NUCLEOTIDE SEQUENCE [GENOMIC DNA] (ISOFORM 1)</scope>
    <source>
        <strain>cv. Landsberg erecta</strain>
    </source>
</reference>
<reference key="2">
    <citation type="journal article" date="1999" name="Nature">
        <title>Sequence and analysis of chromosome 2 of the plant Arabidopsis thaliana.</title>
        <authorList>
            <person name="Lin X."/>
            <person name="Kaul S."/>
            <person name="Rounsley S.D."/>
            <person name="Shea T.P."/>
            <person name="Benito M.-I."/>
            <person name="Town C.D."/>
            <person name="Fujii C.Y."/>
            <person name="Mason T.M."/>
            <person name="Bowman C.L."/>
            <person name="Barnstead M.E."/>
            <person name="Feldblyum T.V."/>
            <person name="Buell C.R."/>
            <person name="Ketchum K.A."/>
            <person name="Lee J.J."/>
            <person name="Ronning C.M."/>
            <person name="Koo H.L."/>
            <person name="Moffat K.S."/>
            <person name="Cronin L.A."/>
            <person name="Shen M."/>
            <person name="Pai G."/>
            <person name="Van Aken S."/>
            <person name="Umayam L."/>
            <person name="Tallon L.J."/>
            <person name="Gill J.E."/>
            <person name="Adams M.D."/>
            <person name="Carrera A.J."/>
            <person name="Creasy T.H."/>
            <person name="Goodman H.M."/>
            <person name="Somerville C.R."/>
            <person name="Copenhaver G.P."/>
            <person name="Preuss D."/>
            <person name="Nierman W.C."/>
            <person name="White O."/>
            <person name="Eisen J.A."/>
            <person name="Salzberg S.L."/>
            <person name="Fraser C.M."/>
            <person name="Venter J.C."/>
        </authorList>
    </citation>
    <scope>NUCLEOTIDE SEQUENCE [LARGE SCALE GENOMIC DNA]</scope>
    <source>
        <strain>cv. Columbia</strain>
    </source>
</reference>
<reference key="3">
    <citation type="journal article" date="2017" name="Plant J.">
        <title>Araport11: a complete reannotation of the Arabidopsis thaliana reference genome.</title>
        <authorList>
            <person name="Cheng C.Y."/>
            <person name="Krishnakumar V."/>
            <person name="Chan A.P."/>
            <person name="Thibaud-Nissen F."/>
            <person name="Schobel S."/>
            <person name="Town C.D."/>
        </authorList>
    </citation>
    <scope>GENOME REANNOTATION</scope>
    <source>
        <strain>cv. Columbia</strain>
    </source>
</reference>
<reference key="4">
    <citation type="journal article" date="2005" name="Plant Physiol.">
        <title>Analysis of the cDNAs of hypothetical genes on Arabidopsis chromosome 2 reveals numerous transcript variants.</title>
        <authorList>
            <person name="Xiao Y.-L."/>
            <person name="Smith S.R."/>
            <person name="Ishmael N."/>
            <person name="Redman J.C."/>
            <person name="Kumar N."/>
            <person name="Monaghan E.L."/>
            <person name="Ayele M."/>
            <person name="Haas B.J."/>
            <person name="Wu H.C."/>
            <person name="Town C.D."/>
        </authorList>
    </citation>
    <scope>NUCLEOTIDE SEQUENCE [LARGE SCALE MRNA] (ISOFORMS 2 AND 3)</scope>
    <source>
        <strain>cv. Columbia</strain>
    </source>
</reference>
<reference key="5">
    <citation type="journal article" date="2001" name="Plant Physiol.">
        <title>A large family of genes that share homology with CLAVATA3.</title>
        <authorList>
            <person name="Cock J.M."/>
            <person name="McCormick S."/>
        </authorList>
    </citation>
    <scope>GENE FAMILY</scope>
    <scope>NOMENCLATURE</scope>
</reference>
<reference key="6">
    <citation type="journal article" date="2005" name="Plant Cell">
        <title>The 14-amino acid CLV3, CLE19, and CLE40 peptides trigger consumption of the root meristem in Arabidopsis through a CLAVATA2-dependent pathway.</title>
        <authorList>
            <person name="Fiers M."/>
            <person name="Golemiec E."/>
            <person name="Xu J."/>
            <person name="van der Geest L."/>
            <person name="Heidstra R."/>
            <person name="Stiekema W."/>
            <person name="Liu C.-M."/>
        </authorList>
    </citation>
    <scope>FUNCTION</scope>
</reference>
<reference key="7">
    <citation type="journal article" date="2006" name="Plant Physiol.">
        <title>Evidence for functional conservation, sufficiency, and proteolytic processing of the CLAVATA3 CLE domain.</title>
        <authorList>
            <person name="Ni J."/>
            <person name="Clark S.E."/>
        </authorList>
    </citation>
    <scope>FUNCTION</scope>
    <scope>PROTEOLYTIC PROCESSING OF MCLV3</scope>
</reference>
<reference key="8">
    <citation type="journal article" date="2006" name="Plant Physiol.">
        <title>The CLAVATA3/ESR motif of CLAVATA3 is functionally independent from the nonconserved flanking sequences.</title>
        <authorList>
            <person name="Fiers M."/>
            <person name="Golemiec E."/>
            <person name="van der Schors R."/>
            <person name="van der Geest L."/>
            <person name="Li K.W."/>
            <person name="Stiekema W.J."/>
            <person name="Liu C.-M."/>
        </authorList>
    </citation>
    <scope>FUNCTION</scope>
    <scope>IDENTIFICATION OF MCLV3</scope>
</reference>
<reference key="9">
    <citation type="journal article" date="2006" name="Plant Physiol.">
        <title>Gain-of-function phenotypes of many CLAVATA3/ESR genes, including four new family members, correlate with tandem variations in the conserved CLAVATA3/ESR domain.</title>
        <authorList>
            <person name="Strabala T.J."/>
            <person name="O'donnell P.J."/>
            <person name="Smit A.-M."/>
            <person name="Ampomah-Dwamena C."/>
            <person name="Martin E.J."/>
            <person name="Netzler N."/>
            <person name="Nieuwenhuizen N.J."/>
            <person name="Quinn B.D."/>
            <person name="Foote H.C.C."/>
            <person name="Hudson K.R."/>
        </authorList>
    </citation>
    <scope>FUNCTION</scope>
    <scope>GENE FAMILY</scope>
</reference>
<reference key="10">
    <citation type="journal article" date="2006" name="Science">
        <title>Dodeca-CLE peptides as suppressors of plant stem cell differentiation.</title>
        <authorList>
            <person name="Ito Y."/>
            <person name="Nakanomyo I."/>
            <person name="Motose H."/>
            <person name="Iwamoto K."/>
            <person name="Sawa S."/>
            <person name="Dohmae N."/>
            <person name="Fukuda H."/>
        </authorList>
    </citation>
    <scope>FUNCTION</scope>
</reference>
<reference key="11">
    <citation type="journal article" date="2006" name="Science">
        <title>A plant peptide encoded by CLV3 identified by in situ MALDI-TOF MS analysis.</title>
        <authorList>
            <person name="Kondo T."/>
            <person name="Sawa S."/>
            <person name="Kinoshita A."/>
            <person name="Mizuno S."/>
            <person name="Kakimoto T."/>
            <person name="Fukuda H."/>
            <person name="Sakagami Y."/>
        </authorList>
    </citation>
    <scope>IDENTIFICATION BY MASS SPECTROMETRY OF MCLV3</scope>
    <scope>HYDROXYLATION AT PRO-73 AND PRO-76</scope>
</reference>
<reference key="12">
    <citation type="journal article" date="2006" name="Plant Cell">
        <title>Dynamic and compensatory responses of Arabidopsis shoot and floral meristems to CLV3 signaling.</title>
        <authorList>
            <person name="Mueller R."/>
            <person name="Borghi L."/>
            <person name="Kwiatkowska D."/>
            <person name="Laufs P."/>
            <person name="Simon R."/>
        </authorList>
    </citation>
    <scope>FUNCTION</scope>
</reference>
<reference key="13">
    <citation type="journal article" date="2008" name="Cell. Mol. Life Sci.">
        <title>The CLE family of plant polypeptide signaling molecules.</title>
        <authorList>
            <person name="Jun J.H."/>
            <person name="Fiume E."/>
            <person name="Fletcher J.C."/>
        </authorList>
    </citation>
    <scope>REVIEW</scope>
</reference>
<reference key="14">
    <citation type="journal article" date="2008" name="Curr. Opin. Plant Biol.">
        <title>Diverse and conserved roles of CLE peptides.</title>
        <authorList>
            <person name="Mitchum M.G."/>
            <person name="Wang X."/>
            <person name="Davis E.L."/>
        </authorList>
    </citation>
    <scope>REVIEW</scope>
</reference>
<reference key="15">
    <citation type="journal article" date="2008" name="Science">
        <title>Arabidopsis CLV3 peptide directly binds CLV1 ectodomain.</title>
        <authorList>
            <person name="Ogawa M."/>
            <person name="Shinohara H."/>
            <person name="Sakagami Y."/>
            <person name="Matsubayashi Y."/>
        </authorList>
    </citation>
    <scope>INTERACTION WITH CLV1</scope>
</reference>
<reference key="16">
    <citation type="journal article" date="2009" name="Nat. Chem. Biol.">
        <title>A glycopeptide regulating stem cell fate in Arabidopsis thaliana.</title>
        <authorList>
            <person name="Ohyama K."/>
            <person name="Shinohara H."/>
            <person name="Ogawa-Ohnishi M."/>
            <person name="Matsubayashi Y."/>
        </authorList>
    </citation>
    <scope>FUNCTION</scope>
    <scope>IDENTIFICATION BY MASS SPECTROMETRY OF MCLV3</scope>
    <scope>INTERACTION WITH CLV1</scope>
    <scope>GLYCOSYLATION AT PRO-76</scope>
    <scope>HYDROXYLATION AT PRO-73 AND PRO-76</scope>
    <scope>SUBCELLULAR LOCATION</scope>
</reference>
<reference key="17">
    <citation type="journal article" date="2010" name="Planta">
        <title>CLE14/CLE20 peptides may interact with CLAVATA2/CORYNE receptor-like kinases to irreversibly inhibit cell division in the root meristem of Arabidopsis.</title>
        <authorList>
            <person name="Meng L."/>
            <person name="Feldman L.J."/>
        </authorList>
    </citation>
    <scope>SUBUNIT</scope>
</reference>
<reference key="18">
    <citation type="journal article" date="2010" name="Plant J.">
        <title>CLAVATA2 forms a distinct CLE-binding receptor complex regulating Arabidopsis stem cell specification.</title>
        <authorList>
            <person name="Guo Y."/>
            <person name="Han L."/>
            <person name="Hymes M."/>
            <person name="Denver R."/>
            <person name="Clark S.E."/>
        </authorList>
    </citation>
    <scope>INTERACTION WITH CLV2</scope>
</reference>
<reference key="19">
    <citation type="journal article" date="2010" name="Plant Physiol.">
        <title>Stem cell signaling in Arabidopsis requires CRN to localize CLV2 to the plasma membrane.</title>
        <authorList>
            <person name="Bleckmann A."/>
            <person name="Weidtkamp-Peters S."/>
            <person name="Seidel C.A.M."/>
            <person name="Simon R."/>
        </authorList>
    </citation>
    <scope>FUNCTION</scope>
</reference>
<reference key="20">
    <citation type="journal article" date="2010" name="Protoplasma">
        <title>CLE peptide signaling during plant development.</title>
        <authorList>
            <person name="Wang G."/>
            <person name="Fiers M."/>
        </authorList>
    </citation>
    <scope>REVIEW</scope>
</reference>
<gene>
    <name evidence="9" type="primary">CLV3</name>
    <name evidence="12" type="ordered locus">At2g27250</name>
    <name evidence="13" type="ORF">F12K2.17</name>
</gene>
<evidence type="ECO:0000250" key="1">
    <source>
        <dbReference type="UniProtKB" id="O49519"/>
    </source>
</evidence>
<evidence type="ECO:0000255" key="2"/>
<evidence type="ECO:0000256" key="3">
    <source>
        <dbReference type="SAM" id="MobiDB-lite"/>
    </source>
</evidence>
<evidence type="ECO:0000269" key="4">
    <source>
    </source>
</evidence>
<evidence type="ECO:0000269" key="5">
    <source>
    </source>
</evidence>
<evidence type="ECO:0000269" key="6">
    <source>
    </source>
</evidence>
<evidence type="ECO:0000269" key="7">
    <source>
    </source>
</evidence>
<evidence type="ECO:0000269" key="8">
    <source>
    </source>
</evidence>
<evidence type="ECO:0000303" key="9">
    <source>
    </source>
</evidence>
<evidence type="ECO:0000303" key="10">
    <source>
    </source>
</evidence>
<evidence type="ECO:0000305" key="11"/>
<evidence type="ECO:0000312" key="12">
    <source>
        <dbReference type="Araport" id="AT2G27250"/>
    </source>
</evidence>
<evidence type="ECO:0000312" key="13">
    <source>
        <dbReference type="EMBL" id="AAD42004.1"/>
    </source>
</evidence>
<protein>
    <recommendedName>
        <fullName evidence="9">Protein CLAVATA 3</fullName>
    </recommendedName>
    <component>
        <recommendedName>
            <fullName evidence="9">MCLV3</fullName>
        </recommendedName>
    </component>
</protein>
<sequence>MDSKSFLLLLLLFCFLFLHDASDLTQAHAHVQGLSNRKMMMMKMESEWVGANGEAEKAKTKGLGLHEELRTVPSGPDPLHHHVNPPRQPRNNFQLP</sequence>
<feature type="signal peptide" evidence="2">
    <location>
        <begin position="1"/>
        <end position="21"/>
    </location>
</feature>
<feature type="chain" id="PRO_0000020949" description="Protein CLAVATA 3">
    <location>
        <begin position="22"/>
        <end position="96"/>
    </location>
</feature>
<feature type="peptide" id="PRO_0000248161" description="MCLV3" evidence="1">
    <location>
        <begin position="70"/>
        <end position="82"/>
    </location>
</feature>
<feature type="region of interest" description="Disordered" evidence="3">
    <location>
        <begin position="68"/>
        <end position="96"/>
    </location>
</feature>
<feature type="modified residue" description="Hydroxyproline" evidence="4 6">
    <location>
        <position position="73"/>
    </location>
</feature>
<feature type="modified residue" description="Hydroxyproline" evidence="4 6">
    <location>
        <position position="76"/>
    </location>
</feature>
<feature type="glycosylation site" description="O-linked (Ara...) hydroxyproline" evidence="6">
    <location>
        <position position="76"/>
    </location>
</feature>
<feature type="splice variant" id="VSP_016629" description="In isoform 2 and isoform 3." evidence="10">
    <original>MDSKSFLLLLLLFCFLFLHDAS</original>
    <variation>MDSYKSQHNFFLLFTISP</variation>
    <location>
        <begin position="1"/>
        <end position="22"/>
    </location>
</feature>
<feature type="splice variant" id="VSP_016630" description="In isoform 3." evidence="10">
    <original>MMMMKMESEWVGANGEAEKAKTKGLGLHEELRTVPSGPDPLHHHVNPPRQPRNNFQLP</original>
    <variation>VIFNLYSLRPLNIHVLCSCRCPVQFNNCFIALVVTRNICIYYYGVQNIVKCCSIGR</variation>
    <location>
        <begin position="39"/>
        <end position="96"/>
    </location>
</feature>
<feature type="sequence conflict" description="In Ref. 1; AAD27620." evidence="11" ref="1">
    <original>L</original>
    <variation>V</variation>
    <location>
        <position position="7"/>
    </location>
</feature>